<organism>
    <name type="scientific">Arabidopsis thaliana</name>
    <name type="common">Mouse-ear cress</name>
    <dbReference type="NCBI Taxonomy" id="3702"/>
    <lineage>
        <taxon>Eukaryota</taxon>
        <taxon>Viridiplantae</taxon>
        <taxon>Streptophyta</taxon>
        <taxon>Embryophyta</taxon>
        <taxon>Tracheophyta</taxon>
        <taxon>Spermatophyta</taxon>
        <taxon>Magnoliopsida</taxon>
        <taxon>eudicotyledons</taxon>
        <taxon>Gunneridae</taxon>
        <taxon>Pentapetalae</taxon>
        <taxon>rosids</taxon>
        <taxon>malvids</taxon>
        <taxon>Brassicales</taxon>
        <taxon>Brassicaceae</taxon>
        <taxon>Camelineae</taxon>
        <taxon>Arabidopsis</taxon>
    </lineage>
</organism>
<keyword id="KW-0067">ATP-binding</keyword>
<keyword id="KW-0406">Ion transport</keyword>
<keyword id="KW-0472">Membrane</keyword>
<keyword id="KW-0547">Nucleotide-binding</keyword>
<keyword id="KW-1185">Reference proteome</keyword>
<keyword id="KW-0812">Transmembrane</keyword>
<keyword id="KW-1133">Transmembrane helix</keyword>
<keyword id="KW-0813">Transport</keyword>
<keyword id="KW-0926">Vacuole</keyword>
<evidence type="ECO:0000250" key="1"/>
<evidence type="ECO:0000255" key="2"/>
<evidence type="ECO:0000269" key="3">
    <source>
    </source>
</evidence>
<evidence type="ECO:0000305" key="4"/>
<reference key="1">
    <citation type="journal article" date="2000" name="Nature">
        <title>Sequence and analysis of chromosome 1 of the plant Arabidopsis thaliana.</title>
        <authorList>
            <person name="Theologis A."/>
            <person name="Ecker J.R."/>
            <person name="Palm C.J."/>
            <person name="Federspiel N.A."/>
            <person name="Kaul S."/>
            <person name="White O."/>
            <person name="Alonso J."/>
            <person name="Altafi H."/>
            <person name="Araujo R."/>
            <person name="Bowman C.L."/>
            <person name="Brooks S.Y."/>
            <person name="Buehler E."/>
            <person name="Chan A."/>
            <person name="Chao Q."/>
            <person name="Chen H."/>
            <person name="Cheuk R.F."/>
            <person name="Chin C.W."/>
            <person name="Chung M.K."/>
            <person name="Conn L."/>
            <person name="Conway A.B."/>
            <person name="Conway A.R."/>
            <person name="Creasy T.H."/>
            <person name="Dewar K."/>
            <person name="Dunn P."/>
            <person name="Etgu P."/>
            <person name="Feldblyum T.V."/>
            <person name="Feng J.-D."/>
            <person name="Fong B."/>
            <person name="Fujii C.Y."/>
            <person name="Gill J.E."/>
            <person name="Goldsmith A.D."/>
            <person name="Haas B."/>
            <person name="Hansen N.F."/>
            <person name="Hughes B."/>
            <person name="Huizar L."/>
            <person name="Hunter J.L."/>
            <person name="Jenkins J."/>
            <person name="Johnson-Hopson C."/>
            <person name="Khan S."/>
            <person name="Khaykin E."/>
            <person name="Kim C.J."/>
            <person name="Koo H.L."/>
            <person name="Kremenetskaia I."/>
            <person name="Kurtz D.B."/>
            <person name="Kwan A."/>
            <person name="Lam B."/>
            <person name="Langin-Hooper S."/>
            <person name="Lee A."/>
            <person name="Lee J.M."/>
            <person name="Lenz C.A."/>
            <person name="Li J.H."/>
            <person name="Li Y.-P."/>
            <person name="Lin X."/>
            <person name="Liu S.X."/>
            <person name="Liu Z.A."/>
            <person name="Luros J.S."/>
            <person name="Maiti R."/>
            <person name="Marziali A."/>
            <person name="Militscher J."/>
            <person name="Miranda M."/>
            <person name="Nguyen M."/>
            <person name="Nierman W.C."/>
            <person name="Osborne B.I."/>
            <person name="Pai G."/>
            <person name="Peterson J."/>
            <person name="Pham P.K."/>
            <person name="Rizzo M."/>
            <person name="Rooney T."/>
            <person name="Rowley D."/>
            <person name="Sakano H."/>
            <person name="Salzberg S.L."/>
            <person name="Schwartz J.R."/>
            <person name="Shinn P."/>
            <person name="Southwick A.M."/>
            <person name="Sun H."/>
            <person name="Tallon L.J."/>
            <person name="Tambunga G."/>
            <person name="Toriumi M.J."/>
            <person name="Town C.D."/>
            <person name="Utterback T."/>
            <person name="Van Aken S."/>
            <person name="Vaysberg M."/>
            <person name="Vysotskaia V.S."/>
            <person name="Walker M."/>
            <person name="Wu D."/>
            <person name="Yu G."/>
            <person name="Fraser C.M."/>
            <person name="Venter J.C."/>
            <person name="Davis R.W."/>
        </authorList>
    </citation>
    <scope>NUCLEOTIDE SEQUENCE [LARGE SCALE GENOMIC DNA]</scope>
    <source>
        <strain>cv. Columbia</strain>
    </source>
</reference>
<reference key="2">
    <citation type="journal article" date="2017" name="Plant J.">
        <title>Araport11: a complete reannotation of the Arabidopsis thaliana reference genome.</title>
        <authorList>
            <person name="Cheng C.Y."/>
            <person name="Krishnakumar V."/>
            <person name="Chan A.P."/>
            <person name="Thibaud-Nissen F."/>
            <person name="Schobel S."/>
            <person name="Town C.D."/>
        </authorList>
    </citation>
    <scope>GENOME REANNOTATION</scope>
    <source>
        <strain>cv. Columbia</strain>
    </source>
</reference>
<reference key="3">
    <citation type="journal article" date="2003" name="Science">
        <title>Empirical analysis of transcriptional activity in the Arabidopsis genome.</title>
        <authorList>
            <person name="Yamada K."/>
            <person name="Lim J."/>
            <person name="Dale J.M."/>
            <person name="Chen H."/>
            <person name="Shinn P."/>
            <person name="Palm C.J."/>
            <person name="Southwick A.M."/>
            <person name="Wu H.C."/>
            <person name="Kim C.J."/>
            <person name="Nguyen M."/>
            <person name="Pham P.K."/>
            <person name="Cheuk R.F."/>
            <person name="Karlin-Newmann G."/>
            <person name="Liu S.X."/>
            <person name="Lam B."/>
            <person name="Sakano H."/>
            <person name="Wu T."/>
            <person name="Yu G."/>
            <person name="Miranda M."/>
            <person name="Quach H.L."/>
            <person name="Tripp M."/>
            <person name="Chang C.H."/>
            <person name="Lee J.M."/>
            <person name="Toriumi M.J."/>
            <person name="Chan M.M."/>
            <person name="Tang C.C."/>
            <person name="Onodera C.S."/>
            <person name="Deng J.M."/>
            <person name="Akiyama K."/>
            <person name="Ansari Y."/>
            <person name="Arakawa T."/>
            <person name="Banh J."/>
            <person name="Banno F."/>
            <person name="Bowser L."/>
            <person name="Brooks S.Y."/>
            <person name="Carninci P."/>
            <person name="Chao Q."/>
            <person name="Choy N."/>
            <person name="Enju A."/>
            <person name="Goldsmith A.D."/>
            <person name="Gurjal M."/>
            <person name="Hansen N.F."/>
            <person name="Hayashizaki Y."/>
            <person name="Johnson-Hopson C."/>
            <person name="Hsuan V.W."/>
            <person name="Iida K."/>
            <person name="Karnes M."/>
            <person name="Khan S."/>
            <person name="Koesema E."/>
            <person name="Ishida J."/>
            <person name="Jiang P.X."/>
            <person name="Jones T."/>
            <person name="Kawai J."/>
            <person name="Kamiya A."/>
            <person name="Meyers C."/>
            <person name="Nakajima M."/>
            <person name="Narusaka M."/>
            <person name="Seki M."/>
            <person name="Sakurai T."/>
            <person name="Satou M."/>
            <person name="Tamse R."/>
            <person name="Vaysberg M."/>
            <person name="Wallender E.K."/>
            <person name="Wong C."/>
            <person name="Yamamura Y."/>
            <person name="Yuan S."/>
            <person name="Shinozaki K."/>
            <person name="Davis R.W."/>
            <person name="Theologis A."/>
            <person name="Ecker J.R."/>
        </authorList>
    </citation>
    <scope>NUCLEOTIDE SEQUENCE [LARGE SCALE MRNA] OF 31-515</scope>
    <source>
        <strain>cv. Columbia</strain>
    </source>
</reference>
<reference key="4">
    <citation type="journal article" date="2008" name="BMC Res. Notes">
        <title>Stress regulated members of the plant organic cation transporter family are localized to the vacuolar membrane.</title>
        <authorList>
            <person name="Kuefner I."/>
            <person name="Koch W."/>
        </authorList>
    </citation>
    <scope>SUBCELLULAR LOCATION</scope>
    <scope>INDUCTION BY ABIOTIC STRESS</scope>
    <scope>TISSUE SPECIFICITY</scope>
    <source>
        <strain>cv. Columbia</strain>
    </source>
</reference>
<sequence length="515" mass="57151">MADSLAPLLPTHIEEDEDTSSPLTFDKILEKSLSDFGFSQFLQIVLVGLALTFDSQQIFITVFTDAYPTWHCLDHTICNPATTDICKIPRSAWDWDGGFKGKSVISEFDLECSSSFLRSLPSSTFYVGSIVGGVVLAMIPDGSLGRKQLLFFSSFAMSLTGISIFLSSNIWIYSFLKFVIGFARSQTGTYALVLISERISTKWRPRATMVPFTLFVLGFMSLSGIAYLVRHASWKVLYLCTSIPAGIHSIFIYFFALESPRWLHLEGKNKEAIEVLKRISPANRGYLESVSSRLRPKETLEQTSSYSIKDLFIIKWAFRRVTLVMIIMFGLGMSYYGVPLAVRDIKVNIYMSEALNAMVELPTFVVTPILLEQFSRRSSVLVNCLIGGASGVLCFVMSLYGRTKIAFALELGSFFCARIGFNLMAIYLVELFPTCVRNSATMMLRQALVVGGACCPLIASLGRNVPSLSFAVFGFAMSGLGLFALLLPETKGLSLCDTMEEQEQRDQALKTSHSC</sequence>
<protein>
    <recommendedName>
        <fullName>Organic cation/carnitine transporter 5</fullName>
        <shortName>AtOCT5</shortName>
    </recommendedName>
</protein>
<proteinExistence type="evidence at transcript level"/>
<gene>
    <name type="primary">OCT5</name>
    <name type="synonym">5-Oct</name>
    <name type="ordered locus">At1g79410</name>
    <name type="ORF">T8K14.17</name>
</gene>
<name>OCT5_ARATH</name>
<feature type="chain" id="PRO_0000415361" description="Organic cation/carnitine transporter 5">
    <location>
        <begin position="1"/>
        <end position="515"/>
    </location>
</feature>
<feature type="topological domain" description="Cytoplasmic" evidence="2">
    <location>
        <begin position="1"/>
        <end position="43"/>
    </location>
</feature>
<feature type="transmembrane region" description="Helical; Name=1" evidence="2">
    <location>
        <begin position="44"/>
        <end position="64"/>
    </location>
</feature>
<feature type="topological domain" description="Extracellular" evidence="2">
    <location>
        <begin position="65"/>
        <end position="124"/>
    </location>
</feature>
<feature type="transmembrane region" description="Helical; Name=2" evidence="2">
    <location>
        <begin position="125"/>
        <end position="145"/>
    </location>
</feature>
<feature type="topological domain" description="Cytoplasmic" evidence="2">
    <location>
        <begin position="146"/>
        <end position="149"/>
    </location>
</feature>
<feature type="transmembrane region" description="Helical; Name=3" evidence="2">
    <location>
        <begin position="150"/>
        <end position="172"/>
    </location>
</feature>
<feature type="topological domain" description="Extracellular" evidence="2">
    <location>
        <begin position="173"/>
        <end position="177"/>
    </location>
</feature>
<feature type="transmembrane region" description="Helical; Name=4" evidence="2">
    <location>
        <begin position="178"/>
        <end position="195"/>
    </location>
</feature>
<feature type="topological domain" description="Cytoplasmic" evidence="2">
    <location>
        <begin position="196"/>
        <end position="208"/>
    </location>
</feature>
<feature type="transmembrane region" description="Helical; Name=5" evidence="2">
    <location>
        <begin position="209"/>
        <end position="229"/>
    </location>
</feature>
<feature type="topological domain" description="Extracellular" evidence="2">
    <location>
        <begin position="230"/>
        <end position="235"/>
    </location>
</feature>
<feature type="transmembrane region" description="Helical; Name=6" evidence="2">
    <location>
        <begin position="236"/>
        <end position="256"/>
    </location>
</feature>
<feature type="topological domain" description="Cytoplasmic" evidence="2">
    <location>
        <begin position="257"/>
        <end position="320"/>
    </location>
</feature>
<feature type="transmembrane region" description="Helical; Name=7" evidence="2">
    <location>
        <begin position="321"/>
        <end position="341"/>
    </location>
</feature>
<feature type="topological domain" description="Extracellular" evidence="2">
    <location>
        <begin position="342"/>
        <end position="350"/>
    </location>
</feature>
<feature type="transmembrane region" description="Helical; Name=8" evidence="2">
    <location>
        <begin position="351"/>
        <end position="371"/>
    </location>
</feature>
<feature type="topological domain" description="Cytoplasmic" evidence="2">
    <location>
        <begin position="372"/>
        <end position="379"/>
    </location>
</feature>
<feature type="transmembrane region" description="Helical; Name=9" evidence="2">
    <location>
        <begin position="380"/>
        <end position="400"/>
    </location>
</feature>
<feature type="topological domain" description="Extracellular" evidence="2">
    <location>
        <begin position="401"/>
        <end position="411"/>
    </location>
</feature>
<feature type="transmembrane region" description="Helical; Name=10" evidence="2">
    <location>
        <begin position="412"/>
        <end position="432"/>
    </location>
</feature>
<feature type="topological domain" description="Cytoplasmic" evidence="2">
    <location>
        <begin position="433"/>
        <end position="441"/>
    </location>
</feature>
<feature type="transmembrane region" description="Helical; Name=11" evidence="2">
    <location>
        <begin position="442"/>
        <end position="462"/>
    </location>
</feature>
<feature type="topological domain" description="Extracellular" evidence="2">
    <location>
        <begin position="463"/>
        <end position="467"/>
    </location>
</feature>
<feature type="transmembrane region" description="Helical; Name=12" evidence="2">
    <location>
        <begin position="468"/>
        <end position="488"/>
    </location>
</feature>
<feature type="topological domain" description="Cytoplasmic" evidence="2">
    <location>
        <begin position="489"/>
        <end position="515"/>
    </location>
</feature>
<feature type="binding site" evidence="2">
    <location>
        <begin position="195"/>
        <end position="202"/>
    </location>
    <ligand>
        <name>ATP</name>
        <dbReference type="ChEBI" id="CHEBI:30616"/>
    </ligand>
</feature>
<dbReference type="EMBL" id="AC007202">
    <property type="protein sequence ID" value="AAD30235.1"/>
    <property type="molecule type" value="Genomic_DNA"/>
</dbReference>
<dbReference type="EMBL" id="CP002684">
    <property type="protein sequence ID" value="AEE36239.1"/>
    <property type="molecule type" value="Genomic_DNA"/>
</dbReference>
<dbReference type="EMBL" id="AY125523">
    <property type="protein sequence ID" value="AAM78113.1"/>
    <property type="status" value="ALT_INIT"/>
    <property type="molecule type" value="mRNA"/>
</dbReference>
<dbReference type="PIR" id="B96825">
    <property type="entry name" value="B96825"/>
</dbReference>
<dbReference type="RefSeq" id="NP_178059.1">
    <property type="nucleotide sequence ID" value="NM_106589.3"/>
</dbReference>
<dbReference type="SMR" id="Q9SAK7"/>
<dbReference type="STRING" id="3702.Q9SAK7"/>
<dbReference type="iPTMnet" id="Q9SAK7"/>
<dbReference type="PaxDb" id="3702-AT1G79410.1"/>
<dbReference type="ProteomicsDB" id="238995"/>
<dbReference type="EnsemblPlants" id="AT1G79410.1">
    <property type="protein sequence ID" value="AT1G79410.1"/>
    <property type="gene ID" value="AT1G79410"/>
</dbReference>
<dbReference type="GeneID" id="844279"/>
<dbReference type="Gramene" id="AT1G79410.1">
    <property type="protein sequence ID" value="AT1G79410.1"/>
    <property type="gene ID" value="AT1G79410"/>
</dbReference>
<dbReference type="KEGG" id="ath:AT1G79410"/>
<dbReference type="Araport" id="AT1G79410"/>
<dbReference type="TAIR" id="AT1G79410">
    <property type="gene designation" value="OCT5"/>
</dbReference>
<dbReference type="eggNOG" id="KOG0255">
    <property type="taxonomic scope" value="Eukaryota"/>
</dbReference>
<dbReference type="HOGENOM" id="CLU_001265_33_5_1"/>
<dbReference type="InParanoid" id="Q9SAK7"/>
<dbReference type="OMA" id="QECQGLC"/>
<dbReference type="PhylomeDB" id="Q9SAK7"/>
<dbReference type="PRO" id="PR:Q9SAK7"/>
<dbReference type="Proteomes" id="UP000006548">
    <property type="component" value="Chromosome 1"/>
</dbReference>
<dbReference type="ExpressionAtlas" id="Q9SAK7">
    <property type="expression patterns" value="baseline and differential"/>
</dbReference>
<dbReference type="GO" id="GO:0005739">
    <property type="term" value="C:mitochondrion"/>
    <property type="evidence" value="ECO:0007005"/>
    <property type="project" value="TAIR"/>
</dbReference>
<dbReference type="GO" id="GO:0009705">
    <property type="term" value="C:plant-type vacuole membrane"/>
    <property type="evidence" value="ECO:0000314"/>
    <property type="project" value="UniProtKB"/>
</dbReference>
<dbReference type="GO" id="GO:0005524">
    <property type="term" value="F:ATP binding"/>
    <property type="evidence" value="ECO:0007669"/>
    <property type="project" value="UniProtKB-KW"/>
</dbReference>
<dbReference type="GO" id="GO:0022857">
    <property type="term" value="F:transmembrane transporter activity"/>
    <property type="evidence" value="ECO:0007669"/>
    <property type="project" value="InterPro"/>
</dbReference>
<dbReference type="GO" id="GO:0070417">
    <property type="term" value="P:cellular response to cold"/>
    <property type="evidence" value="ECO:0000270"/>
    <property type="project" value="UniProtKB"/>
</dbReference>
<dbReference type="GO" id="GO:0071472">
    <property type="term" value="P:cellular response to salt stress"/>
    <property type="evidence" value="ECO:0000270"/>
    <property type="project" value="UniProtKB"/>
</dbReference>
<dbReference type="GO" id="GO:0042631">
    <property type="term" value="P:cellular response to water deprivation"/>
    <property type="evidence" value="ECO:0000270"/>
    <property type="project" value="UniProtKB"/>
</dbReference>
<dbReference type="GO" id="GO:0006811">
    <property type="term" value="P:monoatomic ion transport"/>
    <property type="evidence" value="ECO:0007669"/>
    <property type="project" value="UniProtKB-KW"/>
</dbReference>
<dbReference type="CDD" id="cd17378">
    <property type="entry name" value="MFS_OCT_plant"/>
    <property type="match status" value="1"/>
</dbReference>
<dbReference type="FunFam" id="1.20.1250.20:FF:000417">
    <property type="entry name" value="Organic cation/carnitine transporter 1"/>
    <property type="match status" value="1"/>
</dbReference>
<dbReference type="Gene3D" id="1.20.1250.20">
    <property type="entry name" value="MFS general substrate transporter like domains"/>
    <property type="match status" value="1"/>
</dbReference>
<dbReference type="InterPro" id="IPR020846">
    <property type="entry name" value="MFS_dom"/>
</dbReference>
<dbReference type="InterPro" id="IPR005828">
    <property type="entry name" value="MFS_sugar_transport-like"/>
</dbReference>
<dbReference type="InterPro" id="IPR036259">
    <property type="entry name" value="MFS_trans_sf"/>
</dbReference>
<dbReference type="PANTHER" id="PTHR24064">
    <property type="entry name" value="SOLUTE CARRIER FAMILY 22 MEMBER"/>
    <property type="match status" value="1"/>
</dbReference>
<dbReference type="Pfam" id="PF00083">
    <property type="entry name" value="Sugar_tr"/>
    <property type="match status" value="1"/>
</dbReference>
<dbReference type="SUPFAM" id="SSF103473">
    <property type="entry name" value="MFS general substrate transporter"/>
    <property type="match status" value="1"/>
</dbReference>
<dbReference type="PROSITE" id="PS50850">
    <property type="entry name" value="MFS"/>
    <property type="match status" value="1"/>
</dbReference>
<comment type="function">
    <text evidence="1">High affinity carnitine transporter involved in the active cellular uptake of carnitine. Also transports organic cations (By similarity).</text>
</comment>
<comment type="subcellular location">
    <subcellularLocation>
        <location evidence="3">Vacuole membrane</location>
        <topology evidence="3">Multi-pass membrane protein</topology>
    </subcellularLocation>
</comment>
<comment type="tissue specificity">
    <text evidence="3">Mostly expressed in leaves and siliques, and, to a lower extent, in roots, stems and flowers.</text>
</comment>
<comment type="induction">
    <text evidence="3">During drought, cold and salt stress treatments.</text>
</comment>
<comment type="similarity">
    <text evidence="4">Belongs to the major facilitator (TC 2.A.1) superfamily. Organic cation transporter (TC 2.A.1.19) family.</text>
</comment>
<comment type="sequence caution" evidence="4">
    <conflict type="erroneous initiation">
        <sequence resource="EMBL-CDS" id="AAM78113"/>
    </conflict>
    <text>Truncated N-terminus.</text>
</comment>
<accession>Q9SAK7</accession>
<accession>Q8L7V4</accession>